<organism>
    <name type="scientific">Burkholderia pseudomallei (strain 1710b)</name>
    <dbReference type="NCBI Taxonomy" id="320372"/>
    <lineage>
        <taxon>Bacteria</taxon>
        <taxon>Pseudomonadati</taxon>
        <taxon>Pseudomonadota</taxon>
        <taxon>Betaproteobacteria</taxon>
        <taxon>Burkholderiales</taxon>
        <taxon>Burkholderiaceae</taxon>
        <taxon>Burkholderia</taxon>
        <taxon>pseudomallei group</taxon>
    </lineage>
</organism>
<reference key="1">
    <citation type="journal article" date="2010" name="Genome Biol. Evol.">
        <title>Continuing evolution of Burkholderia mallei through genome reduction and large-scale rearrangements.</title>
        <authorList>
            <person name="Losada L."/>
            <person name="Ronning C.M."/>
            <person name="DeShazer D."/>
            <person name="Woods D."/>
            <person name="Fedorova N."/>
            <person name="Kim H.S."/>
            <person name="Shabalina S.A."/>
            <person name="Pearson T.R."/>
            <person name="Brinkac L."/>
            <person name="Tan P."/>
            <person name="Nandi T."/>
            <person name="Crabtree J."/>
            <person name="Badger J."/>
            <person name="Beckstrom-Sternberg S."/>
            <person name="Saqib M."/>
            <person name="Schutzer S.E."/>
            <person name="Keim P."/>
            <person name="Nierman W.C."/>
        </authorList>
    </citation>
    <scope>NUCLEOTIDE SEQUENCE [LARGE SCALE GENOMIC DNA]</scope>
    <source>
        <strain>1710b</strain>
    </source>
</reference>
<keyword id="KW-0046">Antibiotic resistance</keyword>
<keyword id="KW-0067">ATP-binding</keyword>
<keyword id="KW-0997">Cell inner membrane</keyword>
<keyword id="KW-1003">Cell membrane</keyword>
<keyword id="KW-0472">Membrane</keyword>
<keyword id="KW-0547">Nucleotide-binding</keyword>
<keyword id="KW-1278">Translocase</keyword>
<keyword id="KW-0812">Transmembrane</keyword>
<keyword id="KW-1133">Transmembrane helix</keyword>
<keyword id="KW-0813">Transport</keyword>
<protein>
    <recommendedName>
        <fullName evidence="1">Macrolide export ATP-binding/permease protein MacB</fullName>
        <ecNumber evidence="1">7.6.2.-</ecNumber>
    </recommendedName>
</protein>
<sequence length="653" mass="70312">MTGPLLQLTRVTRRFPAGEKDVVVLDDVSLSIDAGEIVAIVGASGSGKSTLMNILGCLDHPSSGSYTVGGRETSELESDELARLRREHFGFIFQRYHLLPHLCAAENVEMPAVYAGSAQAQRRERALALLARLGLSDRASHRPSQLSGGQQQRVSIARALMNGGEVILADEPTGALDSKSGRDVIRVLRELNALGHTVIIVTHDEQVAAHARRIIEISDGRIVGDRLNPHADAADAAPDASGGAQPQRARRLSAGVGRFAEAFRMAWIALVSHRLRTLLTMLGIIIGITSVVSIVAIGEGAKRYMLDEIGSIGTNTINVYPGADWGDSRADAIQTLVAADAAALADQIYIDSATPETSRSLLLRYRNVDVNALVSGVGERFFQVRGMKLAQGIAFGADEVRRQAQVAVIDENTRRKLFGANPNPLGEVILIDNLPCVVIGVTASKKSAFGDMKNLNVWVPYTTASGRLFGQRHLDSITVRVRDGQPSDAAERSLTKLMLQRHGRKDFFTYNMDSVVKTVEKTGQSLTLLLSLIAVISLVVGGIGVMNIMLVSVTERTREIGIRMAVGARQTDIMQQFLVEAVTVCLMGGAIGIVLSFGMSFVFSLFVDQWKMVFSAASIASAFLCSTLIGVVFGFMPARNASRLDPIDALARD</sequence>
<feature type="chain" id="PRO_0000269930" description="Macrolide export ATP-binding/permease protein MacB">
    <location>
        <begin position="1"/>
        <end position="653"/>
    </location>
</feature>
<feature type="transmembrane region" description="Helical" evidence="1">
    <location>
        <begin position="278"/>
        <end position="298"/>
    </location>
</feature>
<feature type="transmembrane region" description="Helical" evidence="1">
    <location>
        <begin position="526"/>
        <end position="546"/>
    </location>
</feature>
<feature type="transmembrane region" description="Helical" evidence="1">
    <location>
        <begin position="587"/>
        <end position="607"/>
    </location>
</feature>
<feature type="transmembrane region" description="Helical" evidence="1">
    <location>
        <begin position="616"/>
        <end position="636"/>
    </location>
</feature>
<feature type="domain" description="ABC transporter" evidence="1">
    <location>
        <begin position="6"/>
        <end position="244"/>
    </location>
</feature>
<feature type="binding site" evidence="1">
    <location>
        <begin position="42"/>
        <end position="49"/>
    </location>
    <ligand>
        <name>ATP</name>
        <dbReference type="ChEBI" id="CHEBI:30616"/>
    </ligand>
</feature>
<accession>Q3JGG7</accession>
<gene>
    <name evidence="1" type="primary">macB</name>
    <name type="ordered locus">BURPS1710b_A2185</name>
</gene>
<evidence type="ECO:0000255" key="1">
    <source>
        <dbReference type="HAMAP-Rule" id="MF_01720"/>
    </source>
</evidence>
<proteinExistence type="inferred from homology"/>
<name>MACB_BURP1</name>
<dbReference type="EC" id="7.6.2.-" evidence="1"/>
<dbReference type="EMBL" id="CP000125">
    <property type="protein sequence ID" value="ABA53400.1"/>
    <property type="molecule type" value="Genomic_DNA"/>
</dbReference>
<dbReference type="RefSeq" id="WP_004523215.1">
    <property type="nucleotide sequence ID" value="NC_007435.1"/>
</dbReference>
<dbReference type="SMR" id="Q3JGG7"/>
<dbReference type="EnsemblBacteria" id="ABA53400">
    <property type="protein sequence ID" value="ABA53400"/>
    <property type="gene ID" value="BURPS1710b_A2185"/>
</dbReference>
<dbReference type="GeneID" id="93062747"/>
<dbReference type="KEGG" id="bpm:BURPS1710b_A2185"/>
<dbReference type="HOGENOM" id="CLU_000604_78_2_4"/>
<dbReference type="Proteomes" id="UP000002700">
    <property type="component" value="Chromosome II"/>
</dbReference>
<dbReference type="GO" id="GO:0005886">
    <property type="term" value="C:plasma membrane"/>
    <property type="evidence" value="ECO:0007669"/>
    <property type="project" value="UniProtKB-SubCell"/>
</dbReference>
<dbReference type="GO" id="GO:0005524">
    <property type="term" value="F:ATP binding"/>
    <property type="evidence" value="ECO:0007669"/>
    <property type="project" value="UniProtKB-KW"/>
</dbReference>
<dbReference type="GO" id="GO:0016887">
    <property type="term" value="F:ATP hydrolysis activity"/>
    <property type="evidence" value="ECO:0007669"/>
    <property type="project" value="InterPro"/>
</dbReference>
<dbReference type="GO" id="GO:0022857">
    <property type="term" value="F:transmembrane transporter activity"/>
    <property type="evidence" value="ECO:0007669"/>
    <property type="project" value="TreeGrafter"/>
</dbReference>
<dbReference type="GO" id="GO:0046677">
    <property type="term" value="P:response to antibiotic"/>
    <property type="evidence" value="ECO:0007669"/>
    <property type="project" value="UniProtKB-KW"/>
</dbReference>
<dbReference type="CDD" id="cd03255">
    <property type="entry name" value="ABC_MJ0796_LolCDE_FtsE"/>
    <property type="match status" value="1"/>
</dbReference>
<dbReference type="FunFam" id="3.40.50.300:FF:000032">
    <property type="entry name" value="Export ABC transporter ATP-binding protein"/>
    <property type="match status" value="1"/>
</dbReference>
<dbReference type="Gene3D" id="3.40.50.300">
    <property type="entry name" value="P-loop containing nucleotide triphosphate hydrolases"/>
    <property type="match status" value="1"/>
</dbReference>
<dbReference type="InterPro" id="IPR003593">
    <property type="entry name" value="AAA+_ATPase"/>
</dbReference>
<dbReference type="InterPro" id="IPR003838">
    <property type="entry name" value="ABC3_permease_C"/>
</dbReference>
<dbReference type="InterPro" id="IPR003439">
    <property type="entry name" value="ABC_transporter-like_ATP-bd"/>
</dbReference>
<dbReference type="InterPro" id="IPR017871">
    <property type="entry name" value="ABC_transporter-like_CS"/>
</dbReference>
<dbReference type="InterPro" id="IPR017911">
    <property type="entry name" value="MacB-like_ATP-bd"/>
</dbReference>
<dbReference type="InterPro" id="IPR025857">
    <property type="entry name" value="MacB_PCD"/>
</dbReference>
<dbReference type="InterPro" id="IPR050250">
    <property type="entry name" value="Macrolide_Exporter_MacB"/>
</dbReference>
<dbReference type="InterPro" id="IPR027417">
    <property type="entry name" value="P-loop_NTPase"/>
</dbReference>
<dbReference type="NCBIfam" id="NF007826">
    <property type="entry name" value="PRK10535.1"/>
    <property type="match status" value="1"/>
</dbReference>
<dbReference type="PANTHER" id="PTHR30572:SF7">
    <property type="entry name" value="MACROLIDE EXPORT ATP-BINDING_PERMEASE PROTEIN MACB"/>
    <property type="match status" value="1"/>
</dbReference>
<dbReference type="PANTHER" id="PTHR30572">
    <property type="entry name" value="MEMBRANE COMPONENT OF TRANSPORTER-RELATED"/>
    <property type="match status" value="1"/>
</dbReference>
<dbReference type="Pfam" id="PF00005">
    <property type="entry name" value="ABC_tran"/>
    <property type="match status" value="1"/>
</dbReference>
<dbReference type="Pfam" id="PF02687">
    <property type="entry name" value="FtsX"/>
    <property type="match status" value="1"/>
</dbReference>
<dbReference type="Pfam" id="PF12704">
    <property type="entry name" value="MacB_PCD"/>
    <property type="match status" value="1"/>
</dbReference>
<dbReference type="SMART" id="SM00382">
    <property type="entry name" value="AAA"/>
    <property type="match status" value="1"/>
</dbReference>
<dbReference type="SUPFAM" id="SSF52540">
    <property type="entry name" value="P-loop containing nucleoside triphosphate hydrolases"/>
    <property type="match status" value="1"/>
</dbReference>
<dbReference type="PROSITE" id="PS00211">
    <property type="entry name" value="ABC_TRANSPORTER_1"/>
    <property type="match status" value="1"/>
</dbReference>
<dbReference type="PROSITE" id="PS50893">
    <property type="entry name" value="ABC_TRANSPORTER_2"/>
    <property type="match status" value="1"/>
</dbReference>
<dbReference type="PROSITE" id="PS51267">
    <property type="entry name" value="MACB"/>
    <property type="match status" value="1"/>
</dbReference>
<comment type="function">
    <text evidence="1">Non-canonical ABC transporter that contains transmembrane domains (TMD), which form a pore in the inner membrane, and an ATP-binding domain (NBD), which is responsible for energy generation. Confers resistance against macrolides.</text>
</comment>
<comment type="subunit">
    <text evidence="1">Homodimer.</text>
</comment>
<comment type="subcellular location">
    <subcellularLocation>
        <location evidence="1">Cell inner membrane</location>
        <topology evidence="1">Multi-pass membrane protein</topology>
    </subcellularLocation>
</comment>
<comment type="similarity">
    <text evidence="1">Belongs to the ABC transporter superfamily. Macrolide exporter (TC 3.A.1.122) family.</text>
</comment>